<gene>
    <name evidence="13" type="primary">Lasp</name>
    <name type="ORF">CG3849</name>
</gene>
<organism>
    <name type="scientific">Drosophila melanogaster</name>
    <name type="common">Fruit fly</name>
    <dbReference type="NCBI Taxonomy" id="7227"/>
    <lineage>
        <taxon>Eukaryota</taxon>
        <taxon>Metazoa</taxon>
        <taxon>Ecdysozoa</taxon>
        <taxon>Arthropoda</taxon>
        <taxon>Hexapoda</taxon>
        <taxon>Insecta</taxon>
        <taxon>Pterygota</taxon>
        <taxon>Neoptera</taxon>
        <taxon>Endopterygota</taxon>
        <taxon>Diptera</taxon>
        <taxon>Brachycera</taxon>
        <taxon>Muscomorpha</taxon>
        <taxon>Ephydroidea</taxon>
        <taxon>Drosophilidae</taxon>
        <taxon>Drosophila</taxon>
        <taxon>Sophophora</taxon>
    </lineage>
</organism>
<accession>Q8I7C3</accession>
<accession>Q59E31</accession>
<accession>Q9VV91</accession>
<protein>
    <recommendedName>
        <fullName>LIM and SH3 domain protein Lasp</fullName>
    </recommendedName>
</protein>
<sequence length="657" mass="74247">MNKTCARCQKVVYPIEELKCLDKTWHKTCFKCTECGMTLNMKTYKGYNKMPYCEAHIPKAKATAIADTPELKRIAENTKIQSNVKYHADFEKAKGKFTQVADDPETLRIKQNTKHISNVAYHGDLEKKAAMEKQRGSAEVSDSSNESEYFSEQLAAEQFSQYAPTASPIPPAATTLHQQQQQLQHQQQQQYQQHQQQLQQQQHQHQHYLQQQQQTLPPPPIQHQQYNTAAITPTYQQLQQQQQQQQQQRAQQQQLHDPYAHYQQPQALRQQQQQQQQQQQQLLQQQAIKQASHLYPTATSQQQQMPPPQSPANPQQQALNSYNEMRSAILQNSHHPSGNSVDQYDQPQQQQHQPQQQSTNPTLVAAQQQQSHHSLLNNNASNGGISHSHHSNINNNGHGSQNQMLPPQMRRSAASVVAYDGNSKQQVAAGPGAAQNHLQQLYASPNYAAVTPSENSINVKQHASNGHMPNQQQQHVAGGSNIGKIADYDPLTDGPRVVPNAGRSSTTLVYSSEPRGNQGGNSVYPKRIGSVSDIDPANGIYGSLTAAEQAHQQQKHQQYYQQVQMMQQQEHPPQQQQMRQQPSYSSLQEKQSRQSTAMRVYRAIYDYEAQDVDEVSFREGDVIFEVESIDSGWMTGRVERTGKTGMLPANYVEQAVI</sequence>
<comment type="subunit">
    <text>Interacts with osk.</text>
</comment>
<comment type="alternative products">
    <event type="alternative splicing"/>
    <isoform>
        <id>Q8I7C3-1</id>
        <name evidence="7">A</name>
        <sequence type="displayed"/>
    </isoform>
    <isoform>
        <id>Q8I7C3-2</id>
        <name evidence="8">B</name>
        <sequence type="described" ref="VSP_051636 VSP_051637"/>
    </isoform>
</comment>
<reference evidence="10 12" key="1">
    <citation type="submission" date="2003-01" db="EMBL/GenBank/DDBJ databases">
        <title>Lasp interacts with Osk.</title>
        <authorList>
            <person name="Jenny A.P."/>
            <person name="van Berkel W."/>
            <person name="Filardo P."/>
            <person name="Ephrussi A."/>
        </authorList>
    </citation>
    <scope>NUCLEOTIDE SEQUENCE [MRNA] (ISOFORM A)</scope>
    <source>
        <tissue evidence="12">Ovary</tissue>
    </source>
</reference>
<reference evidence="11" key="2">
    <citation type="journal article" date="2000" name="Science">
        <title>The genome sequence of Drosophila melanogaster.</title>
        <authorList>
            <person name="Adams M.D."/>
            <person name="Celniker S.E."/>
            <person name="Holt R.A."/>
            <person name="Evans C.A."/>
            <person name="Gocayne J.D."/>
            <person name="Amanatides P.G."/>
            <person name="Scherer S.E."/>
            <person name="Li P.W."/>
            <person name="Hoskins R.A."/>
            <person name="Galle R.F."/>
            <person name="George R.A."/>
            <person name="Lewis S.E."/>
            <person name="Richards S."/>
            <person name="Ashburner M."/>
            <person name="Henderson S.N."/>
            <person name="Sutton G.G."/>
            <person name="Wortman J.R."/>
            <person name="Yandell M.D."/>
            <person name="Zhang Q."/>
            <person name="Chen L.X."/>
            <person name="Brandon R.C."/>
            <person name="Rogers Y.-H.C."/>
            <person name="Blazej R.G."/>
            <person name="Champe M."/>
            <person name="Pfeiffer B.D."/>
            <person name="Wan K.H."/>
            <person name="Doyle C."/>
            <person name="Baxter E.G."/>
            <person name="Helt G."/>
            <person name="Nelson C.R."/>
            <person name="Miklos G.L.G."/>
            <person name="Abril J.F."/>
            <person name="Agbayani A."/>
            <person name="An H.-J."/>
            <person name="Andrews-Pfannkoch C."/>
            <person name="Baldwin D."/>
            <person name="Ballew R.M."/>
            <person name="Basu A."/>
            <person name="Baxendale J."/>
            <person name="Bayraktaroglu L."/>
            <person name="Beasley E.M."/>
            <person name="Beeson K.Y."/>
            <person name="Benos P.V."/>
            <person name="Berman B.P."/>
            <person name="Bhandari D."/>
            <person name="Bolshakov S."/>
            <person name="Borkova D."/>
            <person name="Botchan M.R."/>
            <person name="Bouck J."/>
            <person name="Brokstein P."/>
            <person name="Brottier P."/>
            <person name="Burtis K.C."/>
            <person name="Busam D.A."/>
            <person name="Butler H."/>
            <person name="Cadieu E."/>
            <person name="Center A."/>
            <person name="Chandra I."/>
            <person name="Cherry J.M."/>
            <person name="Cawley S."/>
            <person name="Dahlke C."/>
            <person name="Davenport L.B."/>
            <person name="Davies P."/>
            <person name="de Pablos B."/>
            <person name="Delcher A."/>
            <person name="Deng Z."/>
            <person name="Mays A.D."/>
            <person name="Dew I."/>
            <person name="Dietz S.M."/>
            <person name="Dodson K."/>
            <person name="Doup L.E."/>
            <person name="Downes M."/>
            <person name="Dugan-Rocha S."/>
            <person name="Dunkov B.C."/>
            <person name="Dunn P."/>
            <person name="Durbin K.J."/>
            <person name="Evangelista C.C."/>
            <person name="Ferraz C."/>
            <person name="Ferriera S."/>
            <person name="Fleischmann W."/>
            <person name="Fosler C."/>
            <person name="Gabrielian A.E."/>
            <person name="Garg N.S."/>
            <person name="Gelbart W.M."/>
            <person name="Glasser K."/>
            <person name="Glodek A."/>
            <person name="Gong F."/>
            <person name="Gorrell J.H."/>
            <person name="Gu Z."/>
            <person name="Guan P."/>
            <person name="Harris M."/>
            <person name="Harris N.L."/>
            <person name="Harvey D.A."/>
            <person name="Heiman T.J."/>
            <person name="Hernandez J.R."/>
            <person name="Houck J."/>
            <person name="Hostin D."/>
            <person name="Houston K.A."/>
            <person name="Howland T.J."/>
            <person name="Wei M.-H."/>
            <person name="Ibegwam C."/>
            <person name="Jalali M."/>
            <person name="Kalush F."/>
            <person name="Karpen G.H."/>
            <person name="Ke Z."/>
            <person name="Kennison J.A."/>
            <person name="Ketchum K.A."/>
            <person name="Kimmel B.E."/>
            <person name="Kodira C.D."/>
            <person name="Kraft C.L."/>
            <person name="Kravitz S."/>
            <person name="Kulp D."/>
            <person name="Lai Z."/>
            <person name="Lasko P."/>
            <person name="Lei Y."/>
            <person name="Levitsky A.A."/>
            <person name="Li J.H."/>
            <person name="Li Z."/>
            <person name="Liang Y."/>
            <person name="Lin X."/>
            <person name="Liu X."/>
            <person name="Mattei B."/>
            <person name="McIntosh T.C."/>
            <person name="McLeod M.P."/>
            <person name="McPherson D."/>
            <person name="Merkulov G."/>
            <person name="Milshina N.V."/>
            <person name="Mobarry C."/>
            <person name="Morris J."/>
            <person name="Moshrefi A."/>
            <person name="Mount S.M."/>
            <person name="Moy M."/>
            <person name="Murphy B."/>
            <person name="Murphy L."/>
            <person name="Muzny D.M."/>
            <person name="Nelson D.L."/>
            <person name="Nelson D.R."/>
            <person name="Nelson K.A."/>
            <person name="Nixon K."/>
            <person name="Nusskern D.R."/>
            <person name="Pacleb J.M."/>
            <person name="Palazzolo M."/>
            <person name="Pittman G.S."/>
            <person name="Pan S."/>
            <person name="Pollard J."/>
            <person name="Puri V."/>
            <person name="Reese M.G."/>
            <person name="Reinert K."/>
            <person name="Remington K."/>
            <person name="Saunders R.D.C."/>
            <person name="Scheeler F."/>
            <person name="Shen H."/>
            <person name="Shue B.C."/>
            <person name="Siden-Kiamos I."/>
            <person name="Simpson M."/>
            <person name="Skupski M.P."/>
            <person name="Smith T.J."/>
            <person name="Spier E."/>
            <person name="Spradling A.C."/>
            <person name="Stapleton M."/>
            <person name="Strong R."/>
            <person name="Sun E."/>
            <person name="Svirskas R."/>
            <person name="Tector C."/>
            <person name="Turner R."/>
            <person name="Venter E."/>
            <person name="Wang A.H."/>
            <person name="Wang X."/>
            <person name="Wang Z.-Y."/>
            <person name="Wassarman D.A."/>
            <person name="Weinstock G.M."/>
            <person name="Weissenbach J."/>
            <person name="Williams S.M."/>
            <person name="Woodage T."/>
            <person name="Worley K.C."/>
            <person name="Wu D."/>
            <person name="Yang S."/>
            <person name="Yao Q.A."/>
            <person name="Ye J."/>
            <person name="Yeh R.-F."/>
            <person name="Zaveri J.S."/>
            <person name="Zhan M."/>
            <person name="Zhang G."/>
            <person name="Zhao Q."/>
            <person name="Zheng L."/>
            <person name="Zheng X.H."/>
            <person name="Zhong F.N."/>
            <person name="Zhong W."/>
            <person name="Zhou X."/>
            <person name="Zhu S.C."/>
            <person name="Zhu X."/>
            <person name="Smith H.O."/>
            <person name="Gibbs R.A."/>
            <person name="Myers E.W."/>
            <person name="Rubin G.M."/>
            <person name="Venter J.C."/>
        </authorList>
    </citation>
    <scope>NUCLEOTIDE SEQUENCE [LARGE SCALE GENOMIC DNA]</scope>
    <source>
        <strain evidence="4">Berkeley</strain>
    </source>
</reference>
<reference evidence="10 11" key="3">
    <citation type="journal article" date="2002" name="Genome Biol.">
        <title>Annotation of the Drosophila melanogaster euchromatic genome: a systematic review.</title>
        <authorList>
            <person name="Misra S."/>
            <person name="Crosby M.A."/>
            <person name="Mungall C.J."/>
            <person name="Matthews B.B."/>
            <person name="Campbell K.S."/>
            <person name="Hradecky P."/>
            <person name="Huang Y."/>
            <person name="Kaminker J.S."/>
            <person name="Millburn G.H."/>
            <person name="Prochnik S.E."/>
            <person name="Smith C.D."/>
            <person name="Tupy J.L."/>
            <person name="Whitfield E.J."/>
            <person name="Bayraktaroglu L."/>
            <person name="Berman B.P."/>
            <person name="Bettencourt B.R."/>
            <person name="Celniker S.E."/>
            <person name="de Grey A.D.N.J."/>
            <person name="Drysdale R.A."/>
            <person name="Harris N.L."/>
            <person name="Richter J."/>
            <person name="Russo S."/>
            <person name="Schroeder A.J."/>
            <person name="Shu S.Q."/>
            <person name="Stapleton M."/>
            <person name="Yamada C."/>
            <person name="Ashburner M."/>
            <person name="Gelbart W.M."/>
            <person name="Rubin G.M."/>
            <person name="Lewis S.E."/>
        </authorList>
    </citation>
    <scope>GENOME REANNOTATION</scope>
    <scope>ALTERNATIVE SPLICING</scope>
    <source>
        <strain>Berkeley</strain>
    </source>
</reference>
<reference evidence="10 12" key="4">
    <citation type="submission" date="2003-02" db="EMBL/GenBank/DDBJ databases">
        <authorList>
            <person name="Stapleton M."/>
            <person name="Brokstein P."/>
            <person name="Hong L."/>
            <person name="Agbayani A."/>
            <person name="Carlson J.W."/>
            <person name="Champe M."/>
            <person name="Chavez C."/>
            <person name="Dorsett V."/>
            <person name="Dresnek D."/>
            <person name="Farfan D."/>
            <person name="Frise E."/>
            <person name="George R.A."/>
            <person name="Gonzalez M."/>
            <person name="Guarin H."/>
            <person name="Kronmiller B."/>
            <person name="Li P.W."/>
            <person name="Liao G."/>
            <person name="Miranda A."/>
            <person name="Mungall C.J."/>
            <person name="Nunoo J."/>
            <person name="Pacleb J.M."/>
            <person name="Paragas V."/>
            <person name="Park S."/>
            <person name="Patel S."/>
            <person name="Phouanenavong S."/>
            <person name="Wan K.H."/>
            <person name="Yu C."/>
            <person name="Lewis S.E."/>
            <person name="Rubin G.M."/>
            <person name="Celniker S.E."/>
        </authorList>
    </citation>
    <scope>NUCLEOTIDE SEQUENCE [LARGE SCALE MRNA] (ISOFORM B)</scope>
    <source>
        <strain>Berkeley</strain>
        <tissue>Testis</tissue>
    </source>
</reference>
<reference key="5">
    <citation type="journal article" date="2007" name="Mol. Biosyst.">
        <title>An integrated chemical, mass spectrometric and computational strategy for (quantitative) phosphoproteomics: application to Drosophila melanogaster Kc167 cells.</title>
        <authorList>
            <person name="Bodenmiller B."/>
            <person name="Mueller L.N."/>
            <person name="Pedrioli P.G.A."/>
            <person name="Pflieger D."/>
            <person name="Juenger M.A."/>
            <person name="Eng J.K."/>
            <person name="Aebersold R."/>
            <person name="Tao W.A."/>
        </authorList>
    </citation>
    <scope>PHOSPHORYLATION [LARGE SCALE ANALYSIS] AT SER-505 AND SER-530</scope>
    <scope>IDENTIFICATION BY MASS SPECTROMETRY</scope>
</reference>
<reference key="6">
    <citation type="journal article" date="2008" name="J. Proteome Res.">
        <title>Phosphoproteome analysis of Drosophila melanogaster embryos.</title>
        <authorList>
            <person name="Zhai B."/>
            <person name="Villen J."/>
            <person name="Beausoleil S.A."/>
            <person name="Mintseris J."/>
            <person name="Gygi S.P."/>
        </authorList>
    </citation>
    <scope>PHOSPHORYLATION [LARGE SCALE ANALYSIS] AT SER-530</scope>
    <scope>IDENTIFICATION BY MASS SPECTROMETRY</scope>
    <source>
        <tissue>Embryo</tissue>
    </source>
</reference>
<proteinExistence type="evidence at protein level"/>
<evidence type="ECO:0000255" key="1">
    <source>
        <dbReference type="PROSITE-ProRule" id="PRU00125"/>
    </source>
</evidence>
<evidence type="ECO:0000255" key="2">
    <source>
        <dbReference type="PROSITE-ProRule" id="PRU00192"/>
    </source>
</evidence>
<evidence type="ECO:0000256" key="3">
    <source>
        <dbReference type="SAM" id="MobiDB-lite"/>
    </source>
</evidence>
<evidence type="ECO:0000269" key="4">
    <source>
    </source>
</evidence>
<evidence type="ECO:0000269" key="5">
    <source>
    </source>
</evidence>
<evidence type="ECO:0000269" key="6">
    <source>
    </source>
</evidence>
<evidence type="ECO:0000269" key="7">
    <source ref="1"/>
</evidence>
<evidence type="ECO:0000303" key="8">
    <source>
    </source>
</evidence>
<evidence type="ECO:0000303" key="9">
    <source ref="4"/>
</evidence>
<evidence type="ECO:0000305" key="10"/>
<evidence type="ECO:0000312" key="11">
    <source>
        <dbReference type="EMBL" id="AAF49426.3"/>
    </source>
</evidence>
<evidence type="ECO:0000312" key="12">
    <source>
        <dbReference type="EMBL" id="CAC82378.1"/>
    </source>
</evidence>
<evidence type="ECO:0000312" key="13">
    <source>
        <dbReference type="FlyBase" id="FBgn0063485"/>
    </source>
</evidence>
<keyword id="KW-0025">Alternative splicing</keyword>
<keyword id="KW-0440">LIM domain</keyword>
<keyword id="KW-0479">Metal-binding</keyword>
<keyword id="KW-0597">Phosphoprotein</keyword>
<keyword id="KW-1185">Reference proteome</keyword>
<keyword id="KW-0677">Repeat</keyword>
<keyword id="KW-0728">SH3 domain</keyword>
<keyword id="KW-0862">Zinc</keyword>
<feature type="chain" id="PRO_0000075766" description="LIM and SH3 domain protein Lasp">
    <location>
        <begin position="1"/>
        <end position="657"/>
    </location>
</feature>
<feature type="domain" description="LIM zinc-binding" evidence="1">
    <location>
        <begin position="3"/>
        <end position="63"/>
    </location>
</feature>
<feature type="repeat" description="Nebulin 1">
    <location>
        <begin position="64"/>
        <end position="95"/>
    </location>
</feature>
<feature type="repeat" description="Nebulin 2">
    <location>
        <begin position="96"/>
        <end position="130"/>
    </location>
</feature>
<feature type="domain" description="SH3" evidence="2">
    <location>
        <begin position="596"/>
        <end position="657"/>
    </location>
</feature>
<feature type="region of interest" description="Disordered" evidence="3">
    <location>
        <begin position="130"/>
        <end position="151"/>
    </location>
</feature>
<feature type="region of interest" description="Disordered" evidence="3">
    <location>
        <begin position="164"/>
        <end position="223"/>
    </location>
</feature>
<feature type="region of interest" description="Disordered" evidence="3">
    <location>
        <begin position="235"/>
        <end position="257"/>
    </location>
</feature>
<feature type="region of interest" description="Disordered" evidence="3">
    <location>
        <begin position="294"/>
        <end position="318"/>
    </location>
</feature>
<feature type="region of interest" description="Disordered" evidence="3">
    <location>
        <begin position="332"/>
        <end position="415"/>
    </location>
</feature>
<feature type="region of interest" description="Disordered" evidence="3">
    <location>
        <begin position="460"/>
        <end position="528"/>
    </location>
</feature>
<feature type="region of interest" description="Disordered" evidence="3">
    <location>
        <begin position="548"/>
        <end position="592"/>
    </location>
</feature>
<feature type="compositionally biased region" description="Polar residues" evidence="3">
    <location>
        <begin position="140"/>
        <end position="150"/>
    </location>
</feature>
<feature type="compositionally biased region" description="Low complexity" evidence="3">
    <location>
        <begin position="172"/>
        <end position="215"/>
    </location>
</feature>
<feature type="compositionally biased region" description="Low complexity" evidence="3">
    <location>
        <begin position="236"/>
        <end position="254"/>
    </location>
</feature>
<feature type="compositionally biased region" description="Polar residues" evidence="3">
    <location>
        <begin position="332"/>
        <end position="341"/>
    </location>
</feature>
<feature type="compositionally biased region" description="Low complexity" evidence="3">
    <location>
        <begin position="342"/>
        <end position="357"/>
    </location>
</feature>
<feature type="compositionally biased region" description="Polar residues" evidence="3">
    <location>
        <begin position="358"/>
        <end position="370"/>
    </location>
</feature>
<feature type="compositionally biased region" description="Low complexity" evidence="3">
    <location>
        <begin position="371"/>
        <end position="403"/>
    </location>
</feature>
<feature type="compositionally biased region" description="Polar residues" evidence="3">
    <location>
        <begin position="460"/>
        <end position="475"/>
    </location>
</feature>
<feature type="compositionally biased region" description="Low complexity" evidence="3">
    <location>
        <begin position="549"/>
        <end position="586"/>
    </location>
</feature>
<feature type="modified residue" description="Phosphoserine" evidence="5">
    <location>
        <position position="505"/>
    </location>
</feature>
<feature type="modified residue" description="Phosphoserine" evidence="5 6">
    <location>
        <position position="530"/>
    </location>
</feature>
<feature type="splice variant" id="VSP_051636" description="In isoform B." evidence="8 9">
    <original>N</original>
    <variation>T</variation>
    <location>
        <position position="145"/>
    </location>
</feature>
<feature type="splice variant" id="VSP_051637" description="In isoform B." evidence="8 9">
    <location>
        <begin position="146"/>
        <end position="298"/>
    </location>
</feature>
<feature type="sequence conflict" description="In Ref. 1." evidence="10" ref="1">
    <original>Q</original>
    <variation>QQQQ</variation>
    <location>
        <position position="190"/>
    </location>
</feature>
<dbReference type="EMBL" id="AJ294538">
    <property type="protein sequence ID" value="CAC82378.1"/>
    <property type="molecule type" value="mRNA"/>
</dbReference>
<dbReference type="EMBL" id="AE014296">
    <property type="protein sequence ID" value="AAF49426.3"/>
    <property type="molecule type" value="Genomic_DNA"/>
</dbReference>
<dbReference type="EMBL" id="AE014296">
    <property type="protein sequence ID" value="AAN11739.2"/>
    <property type="molecule type" value="Genomic_DNA"/>
</dbReference>
<dbReference type="EMBL" id="BT003801">
    <property type="protein sequence ID" value="AAO41484.1"/>
    <property type="molecule type" value="mRNA"/>
</dbReference>
<dbReference type="RefSeq" id="NP_648912.2">
    <molecule id="Q8I7C3-2"/>
    <property type="nucleotide sequence ID" value="NM_140655.3"/>
</dbReference>
<dbReference type="RefSeq" id="NP_730192.2">
    <molecule id="Q8I7C3-1"/>
    <property type="nucleotide sequence ID" value="NM_168681.4"/>
</dbReference>
<dbReference type="SMR" id="Q8I7C3"/>
<dbReference type="BioGRID" id="65163">
    <property type="interactions" value="52"/>
</dbReference>
<dbReference type="FunCoup" id="Q8I7C3">
    <property type="interactions" value="24"/>
</dbReference>
<dbReference type="IntAct" id="Q8I7C3">
    <property type="interactions" value="43"/>
</dbReference>
<dbReference type="STRING" id="7227.FBpp0099495"/>
<dbReference type="GlyGen" id="Q8I7C3">
    <property type="glycosylation" value="1 site"/>
</dbReference>
<dbReference type="iPTMnet" id="Q8I7C3"/>
<dbReference type="PaxDb" id="7227-FBpp0099495"/>
<dbReference type="DNASU" id="39864"/>
<dbReference type="EnsemblMetazoa" id="FBtr0075350">
    <molecule id="Q8I7C3-2"/>
    <property type="protein sequence ID" value="FBpp0075109"/>
    <property type="gene ID" value="FBgn0063485"/>
</dbReference>
<dbReference type="EnsemblMetazoa" id="FBtr0100145">
    <molecule id="Q8I7C3-1"/>
    <property type="protein sequence ID" value="FBpp0099495"/>
    <property type="gene ID" value="FBgn0063485"/>
</dbReference>
<dbReference type="GeneID" id="39864"/>
<dbReference type="KEGG" id="dme:Dmel_CG3849"/>
<dbReference type="AGR" id="FB:FBgn0063485"/>
<dbReference type="CTD" id="39864"/>
<dbReference type="FlyBase" id="FBgn0063485">
    <property type="gene designation" value="Lasp"/>
</dbReference>
<dbReference type="VEuPathDB" id="VectorBase:FBgn0063485"/>
<dbReference type="eggNOG" id="KOG1702">
    <property type="taxonomic scope" value="Eukaryota"/>
</dbReference>
<dbReference type="GeneTree" id="ENSGT00940000154775"/>
<dbReference type="InParanoid" id="Q8I7C3"/>
<dbReference type="OMA" id="TKHNQAN"/>
<dbReference type="OrthoDB" id="191061at2759"/>
<dbReference type="PhylomeDB" id="Q8I7C3"/>
<dbReference type="SignaLink" id="Q8I7C3"/>
<dbReference type="BioGRID-ORCS" id="39864">
    <property type="hits" value="0 hits in 3 CRISPR screens"/>
</dbReference>
<dbReference type="ChiTaRS" id="Lasp">
    <property type="organism name" value="fly"/>
</dbReference>
<dbReference type="GenomeRNAi" id="39864"/>
<dbReference type="PRO" id="PR:Q8I7C3"/>
<dbReference type="Proteomes" id="UP000000803">
    <property type="component" value="Chromosome 3L"/>
</dbReference>
<dbReference type="Bgee" id="FBgn0063485">
    <property type="expression patterns" value="Expressed in seminal fluid secreting gland and 20 other cell types or tissues"/>
</dbReference>
<dbReference type="GO" id="GO:0031672">
    <property type="term" value="C:A band"/>
    <property type="evidence" value="ECO:0000314"/>
    <property type="project" value="FlyBase"/>
</dbReference>
<dbReference type="GO" id="GO:0005829">
    <property type="term" value="C:cytosol"/>
    <property type="evidence" value="ECO:0007005"/>
    <property type="project" value="FlyBase"/>
</dbReference>
<dbReference type="GO" id="GO:0005925">
    <property type="term" value="C:focal adhesion"/>
    <property type="evidence" value="ECO:0000314"/>
    <property type="project" value="FlyBase"/>
</dbReference>
<dbReference type="GO" id="GO:0070864">
    <property type="term" value="C:sperm individualization complex"/>
    <property type="evidence" value="ECO:0000314"/>
    <property type="project" value="FlyBase"/>
</dbReference>
<dbReference type="GO" id="GO:0030018">
    <property type="term" value="C:Z disc"/>
    <property type="evidence" value="ECO:0000314"/>
    <property type="project" value="FlyBase"/>
</dbReference>
<dbReference type="GO" id="GO:0003779">
    <property type="term" value="F:actin binding"/>
    <property type="evidence" value="ECO:0000314"/>
    <property type="project" value="FlyBase"/>
</dbReference>
<dbReference type="GO" id="GO:0051015">
    <property type="term" value="F:actin filament binding"/>
    <property type="evidence" value="ECO:0000318"/>
    <property type="project" value="GO_Central"/>
</dbReference>
<dbReference type="GO" id="GO:0046872">
    <property type="term" value="F:metal ion binding"/>
    <property type="evidence" value="ECO:0007669"/>
    <property type="project" value="UniProtKB-KW"/>
</dbReference>
<dbReference type="GO" id="GO:0071689">
    <property type="term" value="P:muscle thin filament assembly"/>
    <property type="evidence" value="ECO:0000315"/>
    <property type="project" value="FlyBase"/>
</dbReference>
<dbReference type="GO" id="GO:0007279">
    <property type="term" value="P:pole cell formation"/>
    <property type="evidence" value="ECO:0000315"/>
    <property type="project" value="FlyBase"/>
</dbReference>
<dbReference type="GO" id="GO:0045856">
    <property type="term" value="P:positive regulation of pole plasm oskar mRNA localization"/>
    <property type="evidence" value="ECO:0000315"/>
    <property type="project" value="FlyBase"/>
</dbReference>
<dbReference type="GO" id="GO:0014881">
    <property type="term" value="P:regulation of myofibril size"/>
    <property type="evidence" value="ECO:0000315"/>
    <property type="project" value="FlyBase"/>
</dbReference>
<dbReference type="GO" id="GO:0045214">
    <property type="term" value="P:sarcomere organization"/>
    <property type="evidence" value="ECO:0000315"/>
    <property type="project" value="FlyBase"/>
</dbReference>
<dbReference type="GO" id="GO:0007291">
    <property type="term" value="P:sperm individualization"/>
    <property type="evidence" value="ECO:0000315"/>
    <property type="project" value="FlyBase"/>
</dbReference>
<dbReference type="GO" id="GO:0007283">
    <property type="term" value="P:spermatogenesis"/>
    <property type="evidence" value="ECO:0000315"/>
    <property type="project" value="FlyBase"/>
</dbReference>
<dbReference type="CDD" id="cd09447">
    <property type="entry name" value="LIM_LASP"/>
    <property type="match status" value="1"/>
</dbReference>
<dbReference type="CDD" id="cd11789">
    <property type="entry name" value="SH3_Nebulin_family_C"/>
    <property type="match status" value="1"/>
</dbReference>
<dbReference type="FunFam" id="2.10.110.10:FF:000087">
    <property type="entry name" value="LIM zinc-binding domain-containing Nebulette"/>
    <property type="match status" value="1"/>
</dbReference>
<dbReference type="FunFam" id="2.30.30.40:FF:000007">
    <property type="entry name" value="nebulin isoform X1"/>
    <property type="match status" value="1"/>
</dbReference>
<dbReference type="Gene3D" id="2.10.110.10">
    <property type="entry name" value="Cysteine Rich Protein"/>
    <property type="match status" value="1"/>
</dbReference>
<dbReference type="Gene3D" id="2.30.30.40">
    <property type="entry name" value="SH3 Domains"/>
    <property type="match status" value="1"/>
</dbReference>
<dbReference type="InterPro" id="IPR051759">
    <property type="entry name" value="LIM-SH3_domain_protein"/>
</dbReference>
<dbReference type="InterPro" id="IPR000900">
    <property type="entry name" value="Nebulin_repeat"/>
</dbReference>
<dbReference type="InterPro" id="IPR036028">
    <property type="entry name" value="SH3-like_dom_sf"/>
</dbReference>
<dbReference type="InterPro" id="IPR001452">
    <property type="entry name" value="SH3_domain"/>
</dbReference>
<dbReference type="InterPro" id="IPR001781">
    <property type="entry name" value="Znf_LIM"/>
</dbReference>
<dbReference type="PANTHER" id="PTHR46218">
    <property type="entry name" value="LASP"/>
    <property type="match status" value="1"/>
</dbReference>
<dbReference type="PANTHER" id="PTHR46218:SF4">
    <property type="entry name" value="LIM AND SH3 DOMAIN PROTEIN LASP"/>
    <property type="match status" value="1"/>
</dbReference>
<dbReference type="Pfam" id="PF00412">
    <property type="entry name" value="LIM"/>
    <property type="match status" value="1"/>
</dbReference>
<dbReference type="Pfam" id="PF00880">
    <property type="entry name" value="Nebulin"/>
    <property type="match status" value="2"/>
</dbReference>
<dbReference type="Pfam" id="PF00018">
    <property type="entry name" value="SH3_1"/>
    <property type="match status" value="1"/>
</dbReference>
<dbReference type="PRINTS" id="PR00452">
    <property type="entry name" value="SH3DOMAIN"/>
</dbReference>
<dbReference type="SMART" id="SM00132">
    <property type="entry name" value="LIM"/>
    <property type="match status" value="1"/>
</dbReference>
<dbReference type="SMART" id="SM00227">
    <property type="entry name" value="NEBU"/>
    <property type="match status" value="2"/>
</dbReference>
<dbReference type="SMART" id="SM00326">
    <property type="entry name" value="SH3"/>
    <property type="match status" value="1"/>
</dbReference>
<dbReference type="SUPFAM" id="SSF57716">
    <property type="entry name" value="Glucocorticoid receptor-like (DNA-binding domain)"/>
    <property type="match status" value="1"/>
</dbReference>
<dbReference type="SUPFAM" id="SSF50044">
    <property type="entry name" value="SH3-domain"/>
    <property type="match status" value="1"/>
</dbReference>
<dbReference type="PROSITE" id="PS00478">
    <property type="entry name" value="LIM_DOMAIN_1"/>
    <property type="match status" value="1"/>
</dbReference>
<dbReference type="PROSITE" id="PS50023">
    <property type="entry name" value="LIM_DOMAIN_2"/>
    <property type="match status" value="1"/>
</dbReference>
<dbReference type="PROSITE" id="PS51216">
    <property type="entry name" value="NEBULIN"/>
    <property type="match status" value="2"/>
</dbReference>
<dbReference type="PROSITE" id="PS50002">
    <property type="entry name" value="SH3"/>
    <property type="match status" value="1"/>
</dbReference>
<name>LASP1_DROME</name>